<comment type="function">
    <text evidence="1">Bidirectionally degrades single-stranded DNA into large acid-insoluble oligonucleotides, which are then degraded further into small acid-soluble oligonucleotides.</text>
</comment>
<comment type="catalytic activity">
    <reaction evidence="1">
        <text>Exonucleolytic cleavage in either 5'- to 3'- or 3'- to 5'-direction to yield nucleoside 5'-phosphates.</text>
        <dbReference type="EC" id="3.1.11.6"/>
    </reaction>
</comment>
<comment type="subunit">
    <text evidence="1">Heterooligomer composed of large and small subunits.</text>
</comment>
<comment type="subcellular location">
    <subcellularLocation>
        <location evidence="1">Cytoplasm</location>
    </subcellularLocation>
</comment>
<comment type="similarity">
    <text evidence="1">Belongs to the XseA family.</text>
</comment>
<sequence>MLPSQSPAIFTVSRLNQTVRLLLEHEMGQVWISGEISNFTQPASGHWYFTLKDDTAQVRCAMFRNSNRRVTFRPQHGQQVLVRANITLYEPRGDYQIIVESMQPAGEGLLQLKYEQLKAKLQAEGLFDLQYKKSLPSPAHCVGVITSKTGAALHDILHVLKRRDPSLPVIIYPTAVQGDDAPGQIVRAIELANQRNECDVLIVGRGGGSLEDLWSFNDERVARAIFASRIPIVSAVGHETDVTIADFVADLRAPTPSAAAEVVSRNQQELLRQVQSTHQRLEMAMDYYLANRTRRFTQIHHRLQQQHPQLRLARQQTMLERLQKRMSFALESQLKRAGQQQQRLTRQLVQQNPQSRIHRAQTRIQQLEYRLAETLRAQLSATRERFGNAVTHLEAVSPLSTLARGYSVTSAADGAVLKQVKQVKVGETLTTRLGDGVVISEVSAVTKTRKSRKKTSNP</sequence>
<evidence type="ECO:0000255" key="1">
    <source>
        <dbReference type="HAMAP-Rule" id="MF_00378"/>
    </source>
</evidence>
<proteinExistence type="inferred from homology"/>
<accession>A1AE45</accession>
<protein>
    <recommendedName>
        <fullName evidence="1">Exodeoxyribonuclease 7 large subunit</fullName>
        <ecNumber evidence="1">3.1.11.6</ecNumber>
    </recommendedName>
    <alternativeName>
        <fullName evidence="1">Exodeoxyribonuclease VII large subunit</fullName>
        <shortName evidence="1">Exonuclease VII large subunit</shortName>
    </alternativeName>
</protein>
<name>EX7L_ECOK1</name>
<keyword id="KW-0963">Cytoplasm</keyword>
<keyword id="KW-0269">Exonuclease</keyword>
<keyword id="KW-0378">Hydrolase</keyword>
<keyword id="KW-0540">Nuclease</keyword>
<keyword id="KW-1185">Reference proteome</keyword>
<feature type="chain" id="PRO_0000303787" description="Exodeoxyribonuclease 7 large subunit">
    <location>
        <begin position="1"/>
        <end position="458"/>
    </location>
</feature>
<gene>
    <name evidence="1" type="primary">xseA</name>
    <name type="ordered locus">Ecok1_24410</name>
    <name type="ORF">APECO1_4017</name>
</gene>
<organism>
    <name type="scientific">Escherichia coli O1:K1 / APEC</name>
    <dbReference type="NCBI Taxonomy" id="405955"/>
    <lineage>
        <taxon>Bacteria</taxon>
        <taxon>Pseudomonadati</taxon>
        <taxon>Pseudomonadota</taxon>
        <taxon>Gammaproteobacteria</taxon>
        <taxon>Enterobacterales</taxon>
        <taxon>Enterobacteriaceae</taxon>
        <taxon>Escherichia</taxon>
    </lineage>
</organism>
<dbReference type="EC" id="3.1.11.6" evidence="1"/>
<dbReference type="EMBL" id="CP000468">
    <property type="protein sequence ID" value="ABJ01935.1"/>
    <property type="molecule type" value="Genomic_DNA"/>
</dbReference>
<dbReference type="RefSeq" id="WP_000937882.1">
    <property type="nucleotide sequence ID" value="NZ_CADILS010000012.1"/>
</dbReference>
<dbReference type="SMR" id="A1AE45"/>
<dbReference type="KEGG" id="ecv:APECO1_4017"/>
<dbReference type="HOGENOM" id="CLU_023625_3_1_6"/>
<dbReference type="Proteomes" id="UP000008216">
    <property type="component" value="Chromosome"/>
</dbReference>
<dbReference type="GO" id="GO:0005737">
    <property type="term" value="C:cytoplasm"/>
    <property type="evidence" value="ECO:0007669"/>
    <property type="project" value="UniProtKB-SubCell"/>
</dbReference>
<dbReference type="GO" id="GO:0009318">
    <property type="term" value="C:exodeoxyribonuclease VII complex"/>
    <property type="evidence" value="ECO:0007669"/>
    <property type="project" value="InterPro"/>
</dbReference>
<dbReference type="GO" id="GO:0008855">
    <property type="term" value="F:exodeoxyribonuclease VII activity"/>
    <property type="evidence" value="ECO:0007669"/>
    <property type="project" value="UniProtKB-UniRule"/>
</dbReference>
<dbReference type="GO" id="GO:0003676">
    <property type="term" value="F:nucleic acid binding"/>
    <property type="evidence" value="ECO:0007669"/>
    <property type="project" value="InterPro"/>
</dbReference>
<dbReference type="GO" id="GO:0006308">
    <property type="term" value="P:DNA catabolic process"/>
    <property type="evidence" value="ECO:0007669"/>
    <property type="project" value="UniProtKB-UniRule"/>
</dbReference>
<dbReference type="CDD" id="cd04489">
    <property type="entry name" value="ExoVII_LU_OBF"/>
    <property type="match status" value="1"/>
</dbReference>
<dbReference type="HAMAP" id="MF_00378">
    <property type="entry name" value="Exonuc_7_L"/>
    <property type="match status" value="1"/>
</dbReference>
<dbReference type="InterPro" id="IPR003753">
    <property type="entry name" value="Exonuc_VII_L"/>
</dbReference>
<dbReference type="InterPro" id="IPR020579">
    <property type="entry name" value="Exonuc_VII_lsu_C"/>
</dbReference>
<dbReference type="InterPro" id="IPR025824">
    <property type="entry name" value="OB-fold_nuc-bd_dom"/>
</dbReference>
<dbReference type="NCBIfam" id="TIGR00237">
    <property type="entry name" value="xseA"/>
    <property type="match status" value="1"/>
</dbReference>
<dbReference type="PANTHER" id="PTHR30008">
    <property type="entry name" value="EXODEOXYRIBONUCLEASE 7 LARGE SUBUNIT"/>
    <property type="match status" value="1"/>
</dbReference>
<dbReference type="PANTHER" id="PTHR30008:SF0">
    <property type="entry name" value="EXODEOXYRIBONUCLEASE 7 LARGE SUBUNIT"/>
    <property type="match status" value="1"/>
</dbReference>
<dbReference type="Pfam" id="PF02601">
    <property type="entry name" value="Exonuc_VII_L"/>
    <property type="match status" value="1"/>
</dbReference>
<dbReference type="Pfam" id="PF13742">
    <property type="entry name" value="tRNA_anti_2"/>
    <property type="match status" value="1"/>
</dbReference>
<reference key="1">
    <citation type="journal article" date="2007" name="J. Bacteriol.">
        <title>The genome sequence of avian pathogenic Escherichia coli strain O1:K1:H7 shares strong similarities with human extraintestinal pathogenic E. coli genomes.</title>
        <authorList>
            <person name="Johnson T.J."/>
            <person name="Kariyawasam S."/>
            <person name="Wannemuehler Y."/>
            <person name="Mangiamele P."/>
            <person name="Johnson S.J."/>
            <person name="Doetkott C."/>
            <person name="Skyberg J.A."/>
            <person name="Lynne A.M."/>
            <person name="Johnson J.R."/>
            <person name="Nolan L.K."/>
        </authorList>
    </citation>
    <scope>NUCLEOTIDE SEQUENCE [LARGE SCALE GENOMIC DNA]</scope>
</reference>